<feature type="chain" id="PRO_0000323572" description="Deubiquitinase SseL">
    <location>
        <begin position="1"/>
        <end position="340"/>
    </location>
</feature>
<feature type="active site" evidence="1">
    <location>
        <position position="223"/>
    </location>
</feature>
<feature type="active site" description="Nucleophile" evidence="1">
    <location>
        <position position="285"/>
    </location>
</feature>
<accession>Q5PI48</accession>
<protein>
    <recommendedName>
        <fullName>Deubiquitinase SseL</fullName>
        <ecNumber>3.4.22.-</ecNumber>
    </recommendedName>
    <alternativeName>
        <fullName>Deubiquitinating enzyme</fullName>
        <shortName>DUB</shortName>
    </alternativeName>
    <alternativeName>
        <fullName>Deubiquitinating protease</fullName>
    </alternativeName>
    <alternativeName>
        <fullName>Salmonella secreted effector L</fullName>
    </alternativeName>
</protein>
<evidence type="ECO:0000250" key="1"/>
<evidence type="ECO:0000305" key="2"/>
<name>SSEL_SALPA</name>
<reference key="1">
    <citation type="journal article" date="2004" name="Nat. Genet.">
        <title>Comparison of genome degradation in Paratyphi A and Typhi, human-restricted serovars of Salmonella enterica that cause typhoid.</title>
        <authorList>
            <person name="McClelland M."/>
            <person name="Sanderson K.E."/>
            <person name="Clifton S.W."/>
            <person name="Latreille P."/>
            <person name="Porwollik S."/>
            <person name="Sabo A."/>
            <person name="Meyer R."/>
            <person name="Bieri T."/>
            <person name="Ozersky P."/>
            <person name="McLellan M."/>
            <person name="Harkins C.R."/>
            <person name="Wang C."/>
            <person name="Nguyen C."/>
            <person name="Berghoff A."/>
            <person name="Elliott G."/>
            <person name="Kohlberg S."/>
            <person name="Strong C."/>
            <person name="Du F."/>
            <person name="Carter J."/>
            <person name="Kremizki C."/>
            <person name="Layman D."/>
            <person name="Leonard S."/>
            <person name="Sun H."/>
            <person name="Fulton L."/>
            <person name="Nash W."/>
            <person name="Miner T."/>
            <person name="Minx P."/>
            <person name="Delehaunty K."/>
            <person name="Fronick C."/>
            <person name="Magrini V."/>
            <person name="Nhan M."/>
            <person name="Warren W."/>
            <person name="Florea L."/>
            <person name="Spieth J."/>
            <person name="Wilson R.K."/>
        </authorList>
    </citation>
    <scope>NUCLEOTIDE SEQUENCE [LARGE SCALE GENOMIC DNA]</scope>
    <source>
        <strain>ATCC 9150 / SARB42</strain>
    </source>
</reference>
<organism>
    <name type="scientific">Salmonella paratyphi A (strain ATCC 9150 / SARB42)</name>
    <dbReference type="NCBI Taxonomy" id="295319"/>
    <lineage>
        <taxon>Bacteria</taxon>
        <taxon>Pseudomonadati</taxon>
        <taxon>Pseudomonadota</taxon>
        <taxon>Gammaproteobacteria</taxon>
        <taxon>Enterobacterales</taxon>
        <taxon>Enterobacteriaceae</taxon>
        <taxon>Salmonella</taxon>
    </lineage>
</organism>
<sequence length="340" mass="38206">MNICVNSLYRLSTPQFHSLYSEEVSDETLALLIGEVENGNQNCIDLLCNLALRNDNLGHKVEKLLFDLFSGKRSGSPDIDKKINQACLVLHQIANNDITKNNTEWKKLHAPSRLLYMAGSATTDLSKKIEIAHKIMGDQFAQTDQEQVGVENLWCGARMLSSDELAAATQGLAQESPLLSVNYPIGLIHPTTKENILSTQLLEKIAQSGLSHNEVFLVNTGDHWLLCLFYKLAEKIKCLIFNTYYDLNENTKQEIIEAAKIAGISENEDIDFIETNLQNNVPNGCGLFCYHTIQLLSNAGQNDPATTLREFAENFLTLSVEEQTLFNTQTRRQIYEYSLQ</sequence>
<proteinExistence type="inferred from homology"/>
<comment type="function">
    <text evidence="1">Effector proteins function to alter host cell physiology and promote bacterial survival in host tissues. This protease targets the host cell ubiquitin pathway by acting as a deubiquitinase in infected host cells (By similarity).</text>
</comment>
<comment type="subcellular location">
    <subcellularLocation>
        <location evidence="1">Secreted</location>
    </subcellularLocation>
    <subcellularLocation>
        <location evidence="1">Host cytoplasm</location>
    </subcellularLocation>
    <text evidence="1">Secreted via type III secretion system 2 (SPI-2 T3SS), and delivered into the host cytoplasm. In phagocytic cells localizes to the Salmonella-containing vacuole (SCV). In epithelial cells localizes to the Salmonella-containing vacuole (SCV) and to the Salmonella-induced filaments (Sifs), which are tubular membrane extensions from the SCV that are formed at late stages of infection (By similarity).</text>
</comment>
<comment type="similarity">
    <text evidence="2">Belongs to the peptidase C79 family.</text>
</comment>
<comment type="sequence caution" evidence="2">
    <conflict type="erroneous initiation">
        <sequence resource="EMBL-CDS" id="AAV76578"/>
    </conflict>
</comment>
<dbReference type="EC" id="3.4.22.-"/>
<dbReference type="EMBL" id="CP000026">
    <property type="protein sequence ID" value="AAV76578.1"/>
    <property type="status" value="ALT_INIT"/>
    <property type="molecule type" value="Genomic_DNA"/>
</dbReference>
<dbReference type="RefSeq" id="WP_001017746.1">
    <property type="nucleotide sequence ID" value="NC_006511.1"/>
</dbReference>
<dbReference type="SMR" id="Q5PI48"/>
<dbReference type="KEGG" id="spt:SPA0576"/>
<dbReference type="HOGENOM" id="CLU_069513_0_0_6"/>
<dbReference type="Proteomes" id="UP000008185">
    <property type="component" value="Chromosome"/>
</dbReference>
<dbReference type="GO" id="GO:0005576">
    <property type="term" value="C:extracellular region"/>
    <property type="evidence" value="ECO:0007669"/>
    <property type="project" value="UniProtKB-SubCell"/>
</dbReference>
<dbReference type="GO" id="GO:0030430">
    <property type="term" value="C:host cell cytoplasm"/>
    <property type="evidence" value="ECO:0007669"/>
    <property type="project" value="UniProtKB-SubCell"/>
</dbReference>
<dbReference type="GO" id="GO:0008234">
    <property type="term" value="F:cysteine-type peptidase activity"/>
    <property type="evidence" value="ECO:0007669"/>
    <property type="project" value="UniProtKB-KW"/>
</dbReference>
<dbReference type="GO" id="GO:0006508">
    <property type="term" value="P:proteolysis"/>
    <property type="evidence" value="ECO:0007669"/>
    <property type="project" value="UniProtKB-KW"/>
</dbReference>
<dbReference type="InterPro" id="IPR054329">
    <property type="entry name" value="ElaD/SseL-like_N"/>
</dbReference>
<dbReference type="InterPro" id="IPR054328">
    <property type="entry name" value="SseL-like_C"/>
</dbReference>
<dbReference type="NCBIfam" id="NF008812">
    <property type="entry name" value="PRK11836.1"/>
    <property type="match status" value="1"/>
</dbReference>
<dbReference type="NCBIfam" id="NF011421">
    <property type="entry name" value="PRK14848.1"/>
    <property type="match status" value="1"/>
</dbReference>
<dbReference type="Pfam" id="PF22102">
    <property type="entry name" value="ElaD-SseL-like_C"/>
    <property type="match status" value="1"/>
</dbReference>
<dbReference type="Pfam" id="PF22103">
    <property type="entry name" value="ElaD_SseL-like_N"/>
    <property type="match status" value="1"/>
</dbReference>
<keyword id="KW-1035">Host cytoplasm</keyword>
<keyword id="KW-0378">Hydrolase</keyword>
<keyword id="KW-0645">Protease</keyword>
<keyword id="KW-0964">Secreted</keyword>
<keyword id="KW-0788">Thiol protease</keyword>
<keyword id="KW-0843">Virulence</keyword>
<gene>
    <name type="primary">sseL</name>
    <name type="ordered locus">SPA0576</name>
</gene>